<dbReference type="EMBL" id="CP000853">
    <property type="protein sequence ID" value="ABW18044.1"/>
    <property type="molecule type" value="Genomic_DNA"/>
</dbReference>
<dbReference type="RefSeq" id="WP_012158359.1">
    <property type="nucleotide sequence ID" value="NC_009922.1"/>
</dbReference>
<dbReference type="SMR" id="A8MLD0"/>
<dbReference type="STRING" id="350688.Clos_0482"/>
<dbReference type="KEGG" id="aoe:Clos_0482"/>
<dbReference type="eggNOG" id="COG0244">
    <property type="taxonomic scope" value="Bacteria"/>
</dbReference>
<dbReference type="HOGENOM" id="CLU_092227_2_0_9"/>
<dbReference type="OrthoDB" id="9808307at2"/>
<dbReference type="Proteomes" id="UP000000269">
    <property type="component" value="Chromosome"/>
</dbReference>
<dbReference type="GO" id="GO:1990904">
    <property type="term" value="C:ribonucleoprotein complex"/>
    <property type="evidence" value="ECO:0007669"/>
    <property type="project" value="UniProtKB-KW"/>
</dbReference>
<dbReference type="GO" id="GO:0005840">
    <property type="term" value="C:ribosome"/>
    <property type="evidence" value="ECO:0007669"/>
    <property type="project" value="UniProtKB-KW"/>
</dbReference>
<dbReference type="GO" id="GO:0070180">
    <property type="term" value="F:large ribosomal subunit rRNA binding"/>
    <property type="evidence" value="ECO:0007669"/>
    <property type="project" value="UniProtKB-UniRule"/>
</dbReference>
<dbReference type="GO" id="GO:0006412">
    <property type="term" value="P:translation"/>
    <property type="evidence" value="ECO:0007669"/>
    <property type="project" value="UniProtKB-UniRule"/>
</dbReference>
<dbReference type="CDD" id="cd05797">
    <property type="entry name" value="Ribosomal_L10"/>
    <property type="match status" value="1"/>
</dbReference>
<dbReference type="Gene3D" id="3.30.70.1730">
    <property type="match status" value="1"/>
</dbReference>
<dbReference type="Gene3D" id="6.10.250.290">
    <property type="match status" value="1"/>
</dbReference>
<dbReference type="HAMAP" id="MF_00362">
    <property type="entry name" value="Ribosomal_uL10"/>
    <property type="match status" value="1"/>
</dbReference>
<dbReference type="InterPro" id="IPR001790">
    <property type="entry name" value="Ribosomal_uL10"/>
</dbReference>
<dbReference type="InterPro" id="IPR043141">
    <property type="entry name" value="Ribosomal_uL10-like_sf"/>
</dbReference>
<dbReference type="InterPro" id="IPR022973">
    <property type="entry name" value="Ribosomal_uL10_bac"/>
</dbReference>
<dbReference type="InterPro" id="IPR047865">
    <property type="entry name" value="Ribosomal_uL10_bac_type"/>
</dbReference>
<dbReference type="NCBIfam" id="NF000955">
    <property type="entry name" value="PRK00099.1-1"/>
    <property type="match status" value="1"/>
</dbReference>
<dbReference type="PANTHER" id="PTHR11560">
    <property type="entry name" value="39S RIBOSOMAL PROTEIN L10, MITOCHONDRIAL"/>
    <property type="match status" value="1"/>
</dbReference>
<dbReference type="Pfam" id="PF00466">
    <property type="entry name" value="Ribosomal_L10"/>
    <property type="match status" value="1"/>
</dbReference>
<dbReference type="SUPFAM" id="SSF160369">
    <property type="entry name" value="Ribosomal protein L10-like"/>
    <property type="match status" value="1"/>
</dbReference>
<organism>
    <name type="scientific">Alkaliphilus oremlandii (strain OhILAs)</name>
    <name type="common">Clostridium oremlandii (strain OhILAs)</name>
    <dbReference type="NCBI Taxonomy" id="350688"/>
    <lineage>
        <taxon>Bacteria</taxon>
        <taxon>Bacillati</taxon>
        <taxon>Bacillota</taxon>
        <taxon>Clostridia</taxon>
        <taxon>Peptostreptococcales</taxon>
        <taxon>Natronincolaceae</taxon>
        <taxon>Alkaliphilus</taxon>
    </lineage>
</organism>
<gene>
    <name evidence="1" type="primary">rplJ</name>
    <name type="ordered locus">Clos_0482</name>
</gene>
<name>RL10_ALKOO</name>
<proteinExistence type="inferred from homology"/>
<accession>A8MLD0</accession>
<protein>
    <recommendedName>
        <fullName evidence="1">Large ribosomal subunit protein uL10</fullName>
    </recommendedName>
    <alternativeName>
        <fullName evidence="2">50S ribosomal protein L10</fullName>
    </alternativeName>
</protein>
<reference key="1">
    <citation type="submission" date="2007-10" db="EMBL/GenBank/DDBJ databases">
        <title>Complete genome of Alkaliphilus oremlandii OhILAs.</title>
        <authorList>
            <person name="Copeland A."/>
            <person name="Lucas S."/>
            <person name="Lapidus A."/>
            <person name="Barry K."/>
            <person name="Detter J.C."/>
            <person name="Glavina del Rio T."/>
            <person name="Hammon N."/>
            <person name="Israni S."/>
            <person name="Dalin E."/>
            <person name="Tice H."/>
            <person name="Pitluck S."/>
            <person name="Chain P."/>
            <person name="Malfatti S."/>
            <person name="Shin M."/>
            <person name="Vergez L."/>
            <person name="Schmutz J."/>
            <person name="Larimer F."/>
            <person name="Land M."/>
            <person name="Hauser L."/>
            <person name="Kyrpides N."/>
            <person name="Mikhailova N."/>
            <person name="Stolz J.F."/>
            <person name="Dawson A."/>
            <person name="Fisher E."/>
            <person name="Crable B."/>
            <person name="Perera E."/>
            <person name="Lisak J."/>
            <person name="Ranganathan M."/>
            <person name="Basu P."/>
            <person name="Richardson P."/>
        </authorList>
    </citation>
    <scope>NUCLEOTIDE SEQUENCE [LARGE SCALE GENOMIC DNA]</scope>
    <source>
        <strain>OhILAs</strain>
    </source>
</reference>
<keyword id="KW-1185">Reference proteome</keyword>
<keyword id="KW-0687">Ribonucleoprotein</keyword>
<keyword id="KW-0689">Ribosomal protein</keyword>
<keyword id="KW-0694">RNA-binding</keyword>
<keyword id="KW-0699">rRNA-binding</keyword>
<evidence type="ECO:0000255" key="1">
    <source>
        <dbReference type="HAMAP-Rule" id="MF_00362"/>
    </source>
</evidence>
<evidence type="ECO:0000305" key="2"/>
<feature type="chain" id="PRO_1000120910" description="Large ribosomal subunit protein uL10">
    <location>
        <begin position="1"/>
        <end position="167"/>
    </location>
</feature>
<comment type="function">
    <text evidence="1">Forms part of the ribosomal stalk, playing a central role in the interaction of the ribosome with GTP-bound translation factors.</text>
</comment>
<comment type="subunit">
    <text evidence="1">Part of the ribosomal stalk of the 50S ribosomal subunit. The N-terminus interacts with L11 and the large rRNA to form the base of the stalk. The C-terminus forms an elongated spine to which L12 dimers bind in a sequential fashion forming a multimeric L10(L12)X complex.</text>
</comment>
<comment type="similarity">
    <text evidence="1">Belongs to the universal ribosomal protein uL10 family.</text>
</comment>
<sequence>MVKAIDIKKEQVAEITDKLQRSASAIVVDYRGLKVEEVTELRKQCREKGLEYKVYKNTLTRLAAENAGMKELVGELVGPNAIVFSYDDPVAAAKVASEFAKTHKNLELKAGLVEGVLYKDAQLEEFASIPSREVLIAKLLGSFKAPISNFAYLIKAIADKKEAEGQA</sequence>